<accession>C0MA50</accession>
<protein>
    <recommendedName>
        <fullName evidence="1">Probable GTP-binding protein EngB</fullName>
    </recommendedName>
</protein>
<sequence length="199" mass="22750">MSEEQILNTHNASILLSAANKSHYPQDDLPEIALAGRSNVGKSSFINTILGRKSLARTSSKPGKTQLLNFFNVDDKLRLVDVPGYGYAKVSKAERARWGKMIEEYLTTRQNLRAVVSLVDFRHESSQDDIQMYEFLKYYEIPVIIVATKADKVPRGRWNKHESMVKKSLNFDQTDAFIIFSSVERIGIDESWDTILEYL</sequence>
<organism>
    <name type="scientific">Streptococcus equi subsp. equi (strain 4047)</name>
    <dbReference type="NCBI Taxonomy" id="553482"/>
    <lineage>
        <taxon>Bacteria</taxon>
        <taxon>Bacillati</taxon>
        <taxon>Bacillota</taxon>
        <taxon>Bacilli</taxon>
        <taxon>Lactobacillales</taxon>
        <taxon>Streptococcaceae</taxon>
        <taxon>Streptococcus</taxon>
    </lineage>
</organism>
<comment type="function">
    <text evidence="1">Necessary for normal cell division and for the maintenance of normal septation.</text>
</comment>
<comment type="cofactor">
    <cofactor evidence="1">
        <name>Mg(2+)</name>
        <dbReference type="ChEBI" id="CHEBI:18420"/>
    </cofactor>
</comment>
<comment type="similarity">
    <text evidence="1">Belongs to the TRAFAC class TrmE-Era-EngA-EngB-Septin-like GTPase superfamily. EngB GTPase family.</text>
</comment>
<feature type="chain" id="PRO_1000189935" description="Probable GTP-binding protein EngB">
    <location>
        <begin position="1"/>
        <end position="199"/>
    </location>
</feature>
<feature type="domain" description="EngB-type G" evidence="1">
    <location>
        <begin position="28"/>
        <end position="199"/>
    </location>
</feature>
<feature type="binding site" evidence="1">
    <location>
        <begin position="36"/>
        <end position="43"/>
    </location>
    <ligand>
        <name>GTP</name>
        <dbReference type="ChEBI" id="CHEBI:37565"/>
    </ligand>
</feature>
<feature type="binding site" evidence="1">
    <location>
        <position position="43"/>
    </location>
    <ligand>
        <name>Mg(2+)</name>
        <dbReference type="ChEBI" id="CHEBI:18420"/>
    </ligand>
</feature>
<feature type="binding site" evidence="1">
    <location>
        <begin position="63"/>
        <end position="67"/>
    </location>
    <ligand>
        <name>GTP</name>
        <dbReference type="ChEBI" id="CHEBI:37565"/>
    </ligand>
</feature>
<feature type="binding site" evidence="1">
    <location>
        <position position="65"/>
    </location>
    <ligand>
        <name>Mg(2+)</name>
        <dbReference type="ChEBI" id="CHEBI:18420"/>
    </ligand>
</feature>
<feature type="binding site" evidence="1">
    <location>
        <begin position="81"/>
        <end position="84"/>
    </location>
    <ligand>
        <name>GTP</name>
        <dbReference type="ChEBI" id="CHEBI:37565"/>
    </ligand>
</feature>
<feature type="binding site" evidence="1">
    <location>
        <begin position="148"/>
        <end position="151"/>
    </location>
    <ligand>
        <name>GTP</name>
        <dbReference type="ChEBI" id="CHEBI:37565"/>
    </ligand>
</feature>
<feature type="binding site" evidence="1">
    <location>
        <begin position="180"/>
        <end position="182"/>
    </location>
    <ligand>
        <name>GTP</name>
        <dbReference type="ChEBI" id="CHEBI:37565"/>
    </ligand>
</feature>
<name>ENGB_STRE4</name>
<gene>
    <name evidence="1" type="primary">engB</name>
    <name type="ordered locus">SEQ_1114</name>
</gene>
<proteinExistence type="inferred from homology"/>
<dbReference type="EMBL" id="FM204883">
    <property type="protein sequence ID" value="CAW93776.1"/>
    <property type="molecule type" value="Genomic_DNA"/>
</dbReference>
<dbReference type="SMR" id="C0MA50"/>
<dbReference type="KEGG" id="seu:SEQ_1114"/>
<dbReference type="HOGENOM" id="CLU_033732_3_0_9"/>
<dbReference type="OrthoDB" id="9804921at2"/>
<dbReference type="Proteomes" id="UP000001365">
    <property type="component" value="Chromosome"/>
</dbReference>
<dbReference type="GO" id="GO:0005829">
    <property type="term" value="C:cytosol"/>
    <property type="evidence" value="ECO:0007669"/>
    <property type="project" value="TreeGrafter"/>
</dbReference>
<dbReference type="GO" id="GO:0005525">
    <property type="term" value="F:GTP binding"/>
    <property type="evidence" value="ECO:0007669"/>
    <property type="project" value="UniProtKB-UniRule"/>
</dbReference>
<dbReference type="GO" id="GO:0046872">
    <property type="term" value="F:metal ion binding"/>
    <property type="evidence" value="ECO:0007669"/>
    <property type="project" value="UniProtKB-KW"/>
</dbReference>
<dbReference type="GO" id="GO:0000917">
    <property type="term" value="P:division septum assembly"/>
    <property type="evidence" value="ECO:0007669"/>
    <property type="project" value="UniProtKB-KW"/>
</dbReference>
<dbReference type="CDD" id="cd01876">
    <property type="entry name" value="YihA_EngB"/>
    <property type="match status" value="1"/>
</dbReference>
<dbReference type="FunFam" id="3.40.50.300:FF:000098">
    <property type="entry name" value="Probable GTP-binding protein EngB"/>
    <property type="match status" value="1"/>
</dbReference>
<dbReference type="Gene3D" id="3.40.50.300">
    <property type="entry name" value="P-loop containing nucleotide triphosphate hydrolases"/>
    <property type="match status" value="1"/>
</dbReference>
<dbReference type="HAMAP" id="MF_00321">
    <property type="entry name" value="GTPase_EngB"/>
    <property type="match status" value="1"/>
</dbReference>
<dbReference type="InterPro" id="IPR030393">
    <property type="entry name" value="G_ENGB_dom"/>
</dbReference>
<dbReference type="InterPro" id="IPR006073">
    <property type="entry name" value="GTP-bd"/>
</dbReference>
<dbReference type="InterPro" id="IPR019987">
    <property type="entry name" value="GTP-bd_ribosome_bio_YsxC"/>
</dbReference>
<dbReference type="InterPro" id="IPR027417">
    <property type="entry name" value="P-loop_NTPase"/>
</dbReference>
<dbReference type="NCBIfam" id="TIGR03598">
    <property type="entry name" value="GTPase_YsxC"/>
    <property type="match status" value="1"/>
</dbReference>
<dbReference type="PANTHER" id="PTHR11649:SF13">
    <property type="entry name" value="ENGB-TYPE G DOMAIN-CONTAINING PROTEIN"/>
    <property type="match status" value="1"/>
</dbReference>
<dbReference type="PANTHER" id="PTHR11649">
    <property type="entry name" value="MSS1/TRME-RELATED GTP-BINDING PROTEIN"/>
    <property type="match status" value="1"/>
</dbReference>
<dbReference type="Pfam" id="PF01926">
    <property type="entry name" value="MMR_HSR1"/>
    <property type="match status" value="1"/>
</dbReference>
<dbReference type="SUPFAM" id="SSF52540">
    <property type="entry name" value="P-loop containing nucleoside triphosphate hydrolases"/>
    <property type="match status" value="1"/>
</dbReference>
<dbReference type="PROSITE" id="PS51706">
    <property type="entry name" value="G_ENGB"/>
    <property type="match status" value="1"/>
</dbReference>
<reference key="1">
    <citation type="journal article" date="2009" name="PLoS Pathog.">
        <title>Genomic evidence for the evolution of Streptococcus equi: host restriction, increased virulence, and genetic exchange with human pathogens.</title>
        <authorList>
            <person name="Holden M.T.G."/>
            <person name="Heather Z."/>
            <person name="Paillot R."/>
            <person name="Steward K.F."/>
            <person name="Webb K."/>
            <person name="Ainslie F."/>
            <person name="Jourdan T."/>
            <person name="Bason N.C."/>
            <person name="Holroyd N.E."/>
            <person name="Mungall K."/>
            <person name="Quail M.A."/>
            <person name="Sanders M."/>
            <person name="Simmonds M."/>
            <person name="Willey D."/>
            <person name="Brooks K."/>
            <person name="Aanensen D.M."/>
            <person name="Spratt B.G."/>
            <person name="Jolley K.A."/>
            <person name="Maiden M.C.J."/>
            <person name="Kehoe M."/>
            <person name="Chanter N."/>
            <person name="Bentley S.D."/>
            <person name="Robinson C."/>
            <person name="Maskell D.J."/>
            <person name="Parkhill J."/>
            <person name="Waller A.S."/>
        </authorList>
    </citation>
    <scope>NUCLEOTIDE SEQUENCE [LARGE SCALE GENOMIC DNA]</scope>
    <source>
        <strain>4047</strain>
    </source>
</reference>
<evidence type="ECO:0000255" key="1">
    <source>
        <dbReference type="HAMAP-Rule" id="MF_00321"/>
    </source>
</evidence>
<keyword id="KW-0131">Cell cycle</keyword>
<keyword id="KW-0132">Cell division</keyword>
<keyword id="KW-0342">GTP-binding</keyword>
<keyword id="KW-0460">Magnesium</keyword>
<keyword id="KW-0479">Metal-binding</keyword>
<keyword id="KW-0547">Nucleotide-binding</keyword>
<keyword id="KW-0717">Septation</keyword>